<comment type="function">
    <text evidence="1">This is one of the proteins that binds to the 5S RNA in the ribosome where it forms part of the central protuberance.</text>
</comment>
<comment type="subunit">
    <text evidence="1">Part of the 50S ribosomal subunit; part of the 5S rRNA/L5/L18/L25 subcomplex. Contacts the 5S rRNA. Binds to the 5S rRNA independently of L5 and L18.</text>
</comment>
<comment type="similarity">
    <text evidence="1">Belongs to the bacterial ribosomal protein bL25 family. CTC subfamily.</text>
</comment>
<name>RL25_MYCTU</name>
<protein>
    <recommendedName>
        <fullName evidence="1">Large ribosomal subunit protein bL25</fullName>
    </recommendedName>
    <alternativeName>
        <fullName evidence="3">50S ribosomal protein L25</fullName>
    </alternativeName>
    <alternativeName>
        <fullName evidence="1">General stress protein CTC</fullName>
    </alternativeName>
</protein>
<dbReference type="EMBL" id="AL123456">
    <property type="protein sequence ID" value="CCP43765.1"/>
    <property type="molecule type" value="Genomic_DNA"/>
</dbReference>
<dbReference type="PIR" id="B70622">
    <property type="entry name" value="B70622"/>
</dbReference>
<dbReference type="RefSeq" id="NP_215531.1">
    <property type="nucleotide sequence ID" value="NC_000962.3"/>
</dbReference>
<dbReference type="RefSeq" id="WP_003405254.1">
    <property type="nucleotide sequence ID" value="NZ_NVQJ01000018.1"/>
</dbReference>
<dbReference type="PDB" id="5V7Q">
    <property type="method" value="EM"/>
    <property type="resolution" value="3.70 A"/>
    <property type="chains" value="V=1-215"/>
</dbReference>
<dbReference type="PDB" id="5V93">
    <property type="method" value="EM"/>
    <property type="resolution" value="4.00 A"/>
    <property type="chains" value="V=1-215"/>
</dbReference>
<dbReference type="PDB" id="7KGB">
    <property type="method" value="EM"/>
    <property type="resolution" value="2.70 A"/>
    <property type="chains" value="V=1-215"/>
</dbReference>
<dbReference type="PDB" id="7MSC">
    <property type="method" value="EM"/>
    <property type="resolution" value="2.97 A"/>
    <property type="chains" value="V=1-215"/>
</dbReference>
<dbReference type="PDB" id="7MSH">
    <property type="method" value="EM"/>
    <property type="resolution" value="3.23 A"/>
    <property type="chains" value="V=1-215"/>
</dbReference>
<dbReference type="PDB" id="7MSM">
    <property type="method" value="EM"/>
    <property type="resolution" value="2.79 A"/>
    <property type="chains" value="V=1-215"/>
</dbReference>
<dbReference type="PDB" id="7MSZ">
    <property type="method" value="EM"/>
    <property type="resolution" value="3.10 A"/>
    <property type="chains" value="V=1-215"/>
</dbReference>
<dbReference type="PDB" id="7MT2">
    <property type="method" value="EM"/>
    <property type="resolution" value="2.76 A"/>
    <property type="chains" value="V=1-215"/>
</dbReference>
<dbReference type="PDB" id="7MT3">
    <property type="method" value="EM"/>
    <property type="resolution" value="2.80 A"/>
    <property type="chains" value="V=1-215"/>
</dbReference>
<dbReference type="PDB" id="7MT7">
    <property type="method" value="EM"/>
    <property type="resolution" value="2.71 A"/>
    <property type="chains" value="V=1-215"/>
</dbReference>
<dbReference type="PDB" id="7SFR">
    <property type="method" value="EM"/>
    <property type="resolution" value="2.60 A"/>
    <property type="chains" value="V=1-215"/>
</dbReference>
<dbReference type="PDBsum" id="5V7Q"/>
<dbReference type="PDBsum" id="5V93"/>
<dbReference type="PDBsum" id="7KGB"/>
<dbReference type="PDBsum" id="7MSC"/>
<dbReference type="PDBsum" id="7MSH"/>
<dbReference type="PDBsum" id="7MSM"/>
<dbReference type="PDBsum" id="7MSZ"/>
<dbReference type="PDBsum" id="7MT2"/>
<dbReference type="PDBsum" id="7MT3"/>
<dbReference type="PDBsum" id="7MT7"/>
<dbReference type="PDBsum" id="7SFR"/>
<dbReference type="EMDB" id="EMD-22865"/>
<dbReference type="EMDB" id="EMD-23961"/>
<dbReference type="EMDB" id="EMD-23962"/>
<dbReference type="EMDB" id="EMD-23969"/>
<dbReference type="EMDB" id="EMD-23972"/>
<dbReference type="EMDB" id="EMD-23974"/>
<dbReference type="EMDB" id="EMD-23975"/>
<dbReference type="EMDB" id="EMD-23976"/>
<dbReference type="EMDB" id="EMD-8645"/>
<dbReference type="SMR" id="P9WHB5"/>
<dbReference type="FunCoup" id="P9WHB5">
    <property type="interactions" value="61"/>
</dbReference>
<dbReference type="STRING" id="83332.Rv1015c"/>
<dbReference type="PaxDb" id="83332-Rv1015c"/>
<dbReference type="DNASU" id="885992"/>
<dbReference type="GeneID" id="885992"/>
<dbReference type="KEGG" id="mtu:Rv1015c"/>
<dbReference type="KEGG" id="mtv:RVBD_1015c"/>
<dbReference type="TubercuList" id="Rv1015c"/>
<dbReference type="eggNOG" id="COG1825">
    <property type="taxonomic scope" value="Bacteria"/>
</dbReference>
<dbReference type="InParanoid" id="P9WHB5"/>
<dbReference type="OrthoDB" id="5242980at2"/>
<dbReference type="PhylomeDB" id="P9WHB5"/>
<dbReference type="PRO" id="PR:P9WHB5"/>
<dbReference type="Proteomes" id="UP000001584">
    <property type="component" value="Chromosome"/>
</dbReference>
<dbReference type="GO" id="GO:0005829">
    <property type="term" value="C:cytosol"/>
    <property type="evidence" value="ECO:0007005"/>
    <property type="project" value="MTBBASE"/>
</dbReference>
<dbReference type="GO" id="GO:0022625">
    <property type="term" value="C:cytosolic large ribosomal subunit"/>
    <property type="evidence" value="ECO:0000318"/>
    <property type="project" value="GO_Central"/>
</dbReference>
<dbReference type="GO" id="GO:0008097">
    <property type="term" value="F:5S rRNA binding"/>
    <property type="evidence" value="ECO:0000318"/>
    <property type="project" value="GO_Central"/>
</dbReference>
<dbReference type="GO" id="GO:0003735">
    <property type="term" value="F:structural constituent of ribosome"/>
    <property type="evidence" value="ECO:0007669"/>
    <property type="project" value="InterPro"/>
</dbReference>
<dbReference type="GO" id="GO:0006412">
    <property type="term" value="P:translation"/>
    <property type="evidence" value="ECO:0000318"/>
    <property type="project" value="GO_Central"/>
</dbReference>
<dbReference type="CDD" id="cd00495">
    <property type="entry name" value="Ribosomal_L25_TL5_CTC"/>
    <property type="match status" value="1"/>
</dbReference>
<dbReference type="FunFam" id="2.170.120.20:FF:000010">
    <property type="entry name" value="50S ribosomal protein L25"/>
    <property type="match status" value="1"/>
</dbReference>
<dbReference type="FunFam" id="2.40.240.10:FF:000010">
    <property type="entry name" value="50S ribosomal protein L25"/>
    <property type="match status" value="1"/>
</dbReference>
<dbReference type="Gene3D" id="2.170.120.20">
    <property type="entry name" value="Ribosomal protein L25, beta domain"/>
    <property type="match status" value="1"/>
</dbReference>
<dbReference type="Gene3D" id="2.40.240.10">
    <property type="entry name" value="Ribosomal Protein L25, Chain P"/>
    <property type="match status" value="1"/>
</dbReference>
<dbReference type="HAMAP" id="MF_01334">
    <property type="entry name" value="Ribosomal_bL25_CTC"/>
    <property type="match status" value="1"/>
</dbReference>
<dbReference type="InterPro" id="IPR020056">
    <property type="entry name" value="Rbsml_bL25/Gln-tRNA_synth_N"/>
</dbReference>
<dbReference type="InterPro" id="IPR011035">
    <property type="entry name" value="Ribosomal_bL25/Gln-tRNA_synth"/>
</dbReference>
<dbReference type="InterPro" id="IPR020057">
    <property type="entry name" value="Ribosomal_bL25_b-dom"/>
</dbReference>
<dbReference type="InterPro" id="IPR037121">
    <property type="entry name" value="Ribosomal_bL25_C"/>
</dbReference>
<dbReference type="InterPro" id="IPR001021">
    <property type="entry name" value="Ribosomal_bL25_long"/>
</dbReference>
<dbReference type="InterPro" id="IPR029751">
    <property type="entry name" value="Ribosomal_L25_dom"/>
</dbReference>
<dbReference type="InterPro" id="IPR020930">
    <property type="entry name" value="Ribosomal_uL5_bac-type"/>
</dbReference>
<dbReference type="NCBIfam" id="TIGR00731">
    <property type="entry name" value="bL25_bact_ctc"/>
    <property type="match status" value="1"/>
</dbReference>
<dbReference type="NCBIfam" id="NF004131">
    <property type="entry name" value="PRK05618.2-1"/>
    <property type="match status" value="1"/>
</dbReference>
<dbReference type="PANTHER" id="PTHR33284">
    <property type="entry name" value="RIBOSOMAL PROTEIN L25/GLN-TRNA SYNTHETASE, ANTI-CODON-BINDING DOMAIN-CONTAINING PROTEIN"/>
    <property type="match status" value="1"/>
</dbReference>
<dbReference type="PANTHER" id="PTHR33284:SF1">
    <property type="entry name" value="RIBOSOMAL PROTEIN L25_GLN-TRNA SYNTHETASE, ANTI-CODON-BINDING DOMAIN-CONTAINING PROTEIN"/>
    <property type="match status" value="1"/>
</dbReference>
<dbReference type="Pfam" id="PF01386">
    <property type="entry name" value="Ribosomal_L25p"/>
    <property type="match status" value="1"/>
</dbReference>
<dbReference type="Pfam" id="PF14693">
    <property type="entry name" value="Ribosomal_TL5_C"/>
    <property type="match status" value="1"/>
</dbReference>
<dbReference type="SUPFAM" id="SSF50715">
    <property type="entry name" value="Ribosomal protein L25-like"/>
    <property type="match status" value="1"/>
</dbReference>
<keyword id="KW-0002">3D-structure</keyword>
<keyword id="KW-1185">Reference proteome</keyword>
<keyword id="KW-0687">Ribonucleoprotein</keyword>
<keyword id="KW-0689">Ribosomal protein</keyword>
<keyword id="KW-0694">RNA-binding</keyword>
<keyword id="KW-0699">rRNA-binding</keyword>
<evidence type="ECO:0000255" key="1">
    <source>
        <dbReference type="HAMAP-Rule" id="MF_01334"/>
    </source>
</evidence>
<evidence type="ECO:0000256" key="2">
    <source>
        <dbReference type="SAM" id="MobiDB-lite"/>
    </source>
</evidence>
<evidence type="ECO:0000305" key="3"/>
<accession>P9WHB5</accession>
<accession>L0T5G6</accession>
<accession>P66121</accession>
<accession>P96385</accession>
<gene>
    <name evidence="1" type="primary">rplY</name>
    <name evidence="1" type="synonym">ctc</name>
    <name type="ordered locus">Rv1015c</name>
    <name type="ORF">MTCY10G2.34</name>
</gene>
<sequence>MAKSASNQLRVTVRTETGKGASRRARRAGKIPAVLYGHGAEPQHLELPGHDYAAVLRHSGTNAVLTLDIAGKEQLALTKALHIHPIRRTIQHADLLVVRRGEKVVVEVSVVVEGQAGPDTLVTQETNSIEIEAEALSIPEQLTVSIEGAEPGTQLTAGQIALPAGVSLISDPDLLVVNVVKAPTAEELEGEVAGAEEAEEAAVEAGEAEAAGESE</sequence>
<reference key="1">
    <citation type="journal article" date="1998" name="Nature">
        <title>Deciphering the biology of Mycobacterium tuberculosis from the complete genome sequence.</title>
        <authorList>
            <person name="Cole S.T."/>
            <person name="Brosch R."/>
            <person name="Parkhill J."/>
            <person name="Garnier T."/>
            <person name="Churcher C.M."/>
            <person name="Harris D.E."/>
            <person name="Gordon S.V."/>
            <person name="Eiglmeier K."/>
            <person name="Gas S."/>
            <person name="Barry C.E. III"/>
            <person name="Tekaia F."/>
            <person name="Badcock K."/>
            <person name="Basham D."/>
            <person name="Brown D."/>
            <person name="Chillingworth T."/>
            <person name="Connor R."/>
            <person name="Davies R.M."/>
            <person name="Devlin K."/>
            <person name="Feltwell T."/>
            <person name="Gentles S."/>
            <person name="Hamlin N."/>
            <person name="Holroyd S."/>
            <person name="Hornsby T."/>
            <person name="Jagels K."/>
            <person name="Krogh A."/>
            <person name="McLean J."/>
            <person name="Moule S."/>
            <person name="Murphy L.D."/>
            <person name="Oliver S."/>
            <person name="Osborne J."/>
            <person name="Quail M.A."/>
            <person name="Rajandream M.A."/>
            <person name="Rogers J."/>
            <person name="Rutter S."/>
            <person name="Seeger K."/>
            <person name="Skelton S."/>
            <person name="Squares S."/>
            <person name="Squares R."/>
            <person name="Sulston J.E."/>
            <person name="Taylor K."/>
            <person name="Whitehead S."/>
            <person name="Barrell B.G."/>
        </authorList>
    </citation>
    <scope>NUCLEOTIDE SEQUENCE [LARGE SCALE GENOMIC DNA]</scope>
    <source>
        <strain>ATCC 25618 / H37Rv</strain>
    </source>
</reference>
<reference key="2">
    <citation type="journal article" date="2011" name="Mol. Cell. Proteomics">
        <title>Proteogenomic analysis of Mycobacterium tuberculosis by high resolution mass spectrometry.</title>
        <authorList>
            <person name="Kelkar D.S."/>
            <person name="Kumar D."/>
            <person name="Kumar P."/>
            <person name="Balakrishnan L."/>
            <person name="Muthusamy B."/>
            <person name="Yadav A.K."/>
            <person name="Shrivastava P."/>
            <person name="Marimuthu A."/>
            <person name="Anand S."/>
            <person name="Sundaram H."/>
            <person name="Kingsbury R."/>
            <person name="Harsha H.C."/>
            <person name="Nair B."/>
            <person name="Prasad T.S."/>
            <person name="Chauhan D.S."/>
            <person name="Katoch K."/>
            <person name="Katoch V.M."/>
            <person name="Kumar P."/>
            <person name="Chaerkady R."/>
            <person name="Ramachandran S."/>
            <person name="Dash D."/>
            <person name="Pandey A."/>
        </authorList>
    </citation>
    <scope>IDENTIFICATION BY MASS SPECTROMETRY [LARGE SCALE ANALYSIS]</scope>
    <source>
        <strain>ATCC 25618 / H37Rv</strain>
    </source>
</reference>
<organism>
    <name type="scientific">Mycobacterium tuberculosis (strain ATCC 25618 / H37Rv)</name>
    <dbReference type="NCBI Taxonomy" id="83332"/>
    <lineage>
        <taxon>Bacteria</taxon>
        <taxon>Bacillati</taxon>
        <taxon>Actinomycetota</taxon>
        <taxon>Actinomycetes</taxon>
        <taxon>Mycobacteriales</taxon>
        <taxon>Mycobacteriaceae</taxon>
        <taxon>Mycobacterium</taxon>
        <taxon>Mycobacterium tuberculosis complex</taxon>
    </lineage>
</organism>
<feature type="chain" id="PRO_0000181570" description="Large ribosomal subunit protein bL25">
    <location>
        <begin position="1"/>
        <end position="215"/>
    </location>
</feature>
<feature type="region of interest" description="Disordered" evidence="2">
    <location>
        <begin position="1"/>
        <end position="25"/>
    </location>
</feature>
<feature type="region of interest" description="Disordered" evidence="2">
    <location>
        <begin position="187"/>
        <end position="215"/>
    </location>
</feature>
<feature type="compositionally biased region" description="Polar residues" evidence="2">
    <location>
        <begin position="1"/>
        <end position="10"/>
    </location>
</feature>
<proteinExistence type="evidence at protein level"/>